<gene>
    <name evidence="1" type="primary">dcd</name>
    <name type="ordered locus">trd_0546</name>
</gene>
<feature type="chain" id="PRO_1000123159" description="dCTP deaminase">
    <location>
        <begin position="1"/>
        <end position="197"/>
    </location>
</feature>
<feature type="region of interest" description="Disordered" evidence="2">
    <location>
        <begin position="172"/>
        <end position="197"/>
    </location>
</feature>
<feature type="compositionally biased region" description="Basic and acidic residues" evidence="2">
    <location>
        <begin position="176"/>
        <end position="187"/>
    </location>
</feature>
<feature type="active site" description="Proton donor/acceptor" evidence="1">
    <location>
        <position position="133"/>
    </location>
</feature>
<feature type="binding site" evidence="1">
    <location>
        <begin position="105"/>
        <end position="110"/>
    </location>
    <ligand>
        <name>dCTP</name>
        <dbReference type="ChEBI" id="CHEBI:61481"/>
    </ligand>
</feature>
<feature type="binding site" evidence="1">
    <location>
        <position position="166"/>
    </location>
    <ligand>
        <name>dCTP</name>
        <dbReference type="ChEBI" id="CHEBI:61481"/>
    </ligand>
</feature>
<feature type="binding site" evidence="1">
    <location>
        <position position="177"/>
    </location>
    <ligand>
        <name>dCTP</name>
        <dbReference type="ChEBI" id="CHEBI:61481"/>
    </ligand>
</feature>
<sequence>MILSDRDIIAALKSGRIKITPEPDLETQLGACSIDLHLGNTFMVFEHSRFSYIDPRQPQSIGDAMRTIVVPDGEPFIMQAGDFALASTREYIELADDLVGRLEGRSSIARLGITVHSTAALFEPGWAGTATMELSNLGRMAVALYPGMRICSFTFEQLSSPAMVPYRMKRGNKYAGQKDPKPSRLAEELSLEQLRGR</sequence>
<evidence type="ECO:0000255" key="1">
    <source>
        <dbReference type="HAMAP-Rule" id="MF_00146"/>
    </source>
</evidence>
<evidence type="ECO:0000256" key="2">
    <source>
        <dbReference type="SAM" id="MobiDB-lite"/>
    </source>
</evidence>
<comment type="function">
    <text evidence="1">Catalyzes the deamination of dCTP to dUTP.</text>
</comment>
<comment type="catalytic activity">
    <reaction evidence="1">
        <text>dCTP + H2O + H(+) = dUTP + NH4(+)</text>
        <dbReference type="Rhea" id="RHEA:22680"/>
        <dbReference type="ChEBI" id="CHEBI:15377"/>
        <dbReference type="ChEBI" id="CHEBI:15378"/>
        <dbReference type="ChEBI" id="CHEBI:28938"/>
        <dbReference type="ChEBI" id="CHEBI:61481"/>
        <dbReference type="ChEBI" id="CHEBI:61555"/>
        <dbReference type="EC" id="3.5.4.13"/>
    </reaction>
</comment>
<comment type="pathway">
    <text evidence="1">Pyrimidine metabolism; dUMP biosynthesis; dUMP from dCTP (dUTP route): step 1/2.</text>
</comment>
<comment type="subunit">
    <text evidence="1">Homotrimer.</text>
</comment>
<comment type="similarity">
    <text evidence="1">Belongs to the dCTP deaminase family.</text>
</comment>
<proteinExistence type="inferred from homology"/>
<protein>
    <recommendedName>
        <fullName evidence="1">dCTP deaminase</fullName>
        <ecNumber evidence="1">3.5.4.13</ecNumber>
    </recommendedName>
    <alternativeName>
        <fullName evidence="1">Deoxycytidine triphosphate deaminase</fullName>
    </alternativeName>
</protein>
<organism>
    <name type="scientific">Thermomicrobium roseum (strain ATCC 27502 / DSM 5159 / P-2)</name>
    <dbReference type="NCBI Taxonomy" id="309801"/>
    <lineage>
        <taxon>Bacteria</taxon>
        <taxon>Pseudomonadati</taxon>
        <taxon>Thermomicrobiota</taxon>
        <taxon>Thermomicrobia</taxon>
        <taxon>Thermomicrobiales</taxon>
        <taxon>Thermomicrobiaceae</taxon>
        <taxon>Thermomicrobium</taxon>
    </lineage>
</organism>
<accession>B9KYK0</accession>
<keyword id="KW-0378">Hydrolase</keyword>
<keyword id="KW-0546">Nucleotide metabolism</keyword>
<keyword id="KW-0547">Nucleotide-binding</keyword>
<keyword id="KW-1185">Reference proteome</keyword>
<dbReference type="EC" id="3.5.4.13" evidence="1"/>
<dbReference type="EMBL" id="CP001275">
    <property type="protein sequence ID" value="ACM04845.1"/>
    <property type="molecule type" value="Genomic_DNA"/>
</dbReference>
<dbReference type="RefSeq" id="WP_012641950.1">
    <property type="nucleotide sequence ID" value="NC_011959.1"/>
</dbReference>
<dbReference type="SMR" id="B9KYK0"/>
<dbReference type="STRING" id="309801.trd_0546"/>
<dbReference type="KEGG" id="tro:trd_0546"/>
<dbReference type="eggNOG" id="COG0717">
    <property type="taxonomic scope" value="Bacteria"/>
</dbReference>
<dbReference type="HOGENOM" id="CLU_087476_2_1_0"/>
<dbReference type="OrthoDB" id="9780202at2"/>
<dbReference type="UniPathway" id="UPA00610">
    <property type="reaction ID" value="UER00665"/>
</dbReference>
<dbReference type="Proteomes" id="UP000000447">
    <property type="component" value="Chromosome"/>
</dbReference>
<dbReference type="GO" id="GO:0008829">
    <property type="term" value="F:dCTP deaminase activity"/>
    <property type="evidence" value="ECO:0007669"/>
    <property type="project" value="UniProtKB-UniRule"/>
</dbReference>
<dbReference type="GO" id="GO:0000166">
    <property type="term" value="F:nucleotide binding"/>
    <property type="evidence" value="ECO:0007669"/>
    <property type="project" value="UniProtKB-KW"/>
</dbReference>
<dbReference type="GO" id="GO:0006226">
    <property type="term" value="P:dUMP biosynthetic process"/>
    <property type="evidence" value="ECO:0007669"/>
    <property type="project" value="UniProtKB-UniPathway"/>
</dbReference>
<dbReference type="GO" id="GO:0006229">
    <property type="term" value="P:dUTP biosynthetic process"/>
    <property type="evidence" value="ECO:0007669"/>
    <property type="project" value="UniProtKB-UniRule"/>
</dbReference>
<dbReference type="GO" id="GO:0015949">
    <property type="term" value="P:nucleobase-containing small molecule interconversion"/>
    <property type="evidence" value="ECO:0007669"/>
    <property type="project" value="TreeGrafter"/>
</dbReference>
<dbReference type="CDD" id="cd07557">
    <property type="entry name" value="trimeric_dUTPase"/>
    <property type="match status" value="1"/>
</dbReference>
<dbReference type="Gene3D" id="2.70.40.10">
    <property type="match status" value="1"/>
</dbReference>
<dbReference type="HAMAP" id="MF_00146">
    <property type="entry name" value="dCTP_deaminase"/>
    <property type="match status" value="1"/>
</dbReference>
<dbReference type="InterPro" id="IPR011962">
    <property type="entry name" value="dCTP_deaminase"/>
</dbReference>
<dbReference type="InterPro" id="IPR036157">
    <property type="entry name" value="dUTPase-like_sf"/>
</dbReference>
<dbReference type="InterPro" id="IPR033704">
    <property type="entry name" value="dUTPase_trimeric"/>
</dbReference>
<dbReference type="NCBIfam" id="TIGR02274">
    <property type="entry name" value="dCTP_deam"/>
    <property type="match status" value="1"/>
</dbReference>
<dbReference type="PANTHER" id="PTHR42680">
    <property type="entry name" value="DCTP DEAMINASE"/>
    <property type="match status" value="1"/>
</dbReference>
<dbReference type="PANTHER" id="PTHR42680:SF3">
    <property type="entry name" value="DCTP DEAMINASE"/>
    <property type="match status" value="1"/>
</dbReference>
<dbReference type="Pfam" id="PF22769">
    <property type="entry name" value="DCD"/>
    <property type="match status" value="1"/>
</dbReference>
<dbReference type="SUPFAM" id="SSF51283">
    <property type="entry name" value="dUTPase-like"/>
    <property type="match status" value="1"/>
</dbReference>
<reference key="1">
    <citation type="journal article" date="2009" name="PLoS ONE">
        <title>Complete genome sequence of the aerobic CO-oxidizing thermophile Thermomicrobium roseum.</title>
        <authorList>
            <person name="Wu D."/>
            <person name="Raymond J."/>
            <person name="Wu M."/>
            <person name="Chatterji S."/>
            <person name="Ren Q."/>
            <person name="Graham J.E."/>
            <person name="Bryant D.A."/>
            <person name="Robb F."/>
            <person name="Colman A."/>
            <person name="Tallon L.J."/>
            <person name="Badger J.H."/>
            <person name="Madupu R."/>
            <person name="Ward N.L."/>
            <person name="Eisen J.A."/>
        </authorList>
    </citation>
    <scope>NUCLEOTIDE SEQUENCE [LARGE SCALE GENOMIC DNA]</scope>
    <source>
        <strain>ATCC 27502 / DSM 5159 / P-2</strain>
    </source>
</reference>
<name>DCD_THERP</name>